<sequence>MGVSMITIVTLLDECDRLPGRSRDAASTLWIFLIKQCMEQIQDDVGVPIIVRAADLFRFAKPMLILPRQHRPIVRTKPPDGTGVRGTGLAGTRDSFIVRLFEDVAGCSTEWQDVLSGYLMLESEVSGNAPHSLWIVGAADICRIALECIPLPKRLLAIKVSGTWSGMPWAIPDNIQTLLTSTWEPKFDTPEDRAHFCDSDMVCVYKILGSPPNPLKPPEIEPPQMSSTPGRLFCCGKCCKKEDRDAIAIPVRYTATGKSRIQKKCRAGSH</sequence>
<keyword id="KW-1185">Reference proteome</keyword>
<proteinExistence type="inferred from homology"/>
<reference key="1">
    <citation type="journal article" date="2000" name="J. Virol.">
        <title>The genome of a very virulent Marek's disease virus.</title>
        <authorList>
            <person name="Tulman E.R."/>
            <person name="Afonso C.L."/>
            <person name="Lu Z."/>
            <person name="Zsak L."/>
            <person name="Rock D.L."/>
            <person name="Kutish G.F."/>
        </authorList>
    </citation>
    <scope>NUCLEOTIDE SEQUENCE [LARGE SCALE GENOMIC DNA]</scope>
</reference>
<protein>
    <recommendedName>
        <fullName>Protein US2 homolog</fullName>
    </recommendedName>
</protein>
<comment type="similarity">
    <text evidence="1">Belongs to the herpesviridae US2 family.</text>
</comment>
<feature type="chain" id="PRO_0000406530" description="Protein US2 homolog">
    <location>
        <begin position="1"/>
        <end position="270"/>
    </location>
</feature>
<dbReference type="EMBL" id="AF243438">
    <property type="protein sequence ID" value="AAG14265.1"/>
    <property type="molecule type" value="Genomic_DNA"/>
</dbReference>
<dbReference type="RefSeq" id="YP_001034008.1">
    <property type="nucleotide sequence ID" value="NC_002229.3"/>
</dbReference>
<dbReference type="GeneID" id="4811450"/>
<dbReference type="KEGG" id="vg:4811450"/>
<dbReference type="Proteomes" id="UP000008072">
    <property type="component" value="Segment"/>
</dbReference>
<dbReference type="InterPro" id="IPR003485">
    <property type="entry name" value="Herpes_US2_varicellovirus"/>
</dbReference>
<dbReference type="Pfam" id="PF02476">
    <property type="entry name" value="US2"/>
    <property type="match status" value="1"/>
</dbReference>
<organism>
    <name type="scientific">Gallid herpesvirus 2 (strain Chicken/Md5/ATCC VR-987)</name>
    <name type="common">GaHV-2</name>
    <name type="synonym">Marek's disease herpesvirus type 1</name>
    <dbReference type="NCBI Taxonomy" id="10389"/>
    <lineage>
        <taxon>Viruses</taxon>
        <taxon>Duplodnaviria</taxon>
        <taxon>Heunggongvirae</taxon>
        <taxon>Peploviricota</taxon>
        <taxon>Herviviricetes</taxon>
        <taxon>Herpesvirales</taxon>
        <taxon>Orthoherpesviridae</taxon>
        <taxon>Alphaherpesvirinae</taxon>
        <taxon>Mardivirus</taxon>
        <taxon>Mardivirus gallidalpha2</taxon>
        <taxon>Gallid alphaherpesvirus 2</taxon>
    </lineage>
</organism>
<gene>
    <name type="primary">MDV091</name>
</gene>
<name>US02_GAHVM</name>
<accession>Q9E6L9</accession>
<organismHost>
    <name type="scientific">Gallus gallus</name>
    <name type="common">Chicken</name>
    <dbReference type="NCBI Taxonomy" id="9031"/>
</organismHost>
<evidence type="ECO:0000305" key="1"/>